<accession>C1L2L0</accession>
<proteinExistence type="inferred from homology"/>
<sequence length="109" mass="11926">MTMKLIWDKFYVSIIFVLTCIILGIILMCTVVGGGNDYSEVNVSEGDSLWALADQYAGKSDMAKADFVSWVEKENNLADGHVEAGDSVVIPVHKTKLIKSDSTIQLANQ</sequence>
<gene>
    <name evidence="1" type="primary">yneA</name>
    <name type="ordered locus">Lm4b_01312</name>
</gene>
<protein>
    <recommendedName>
        <fullName evidence="1">Cell division suppressor protein YneA</fullName>
    </recommendedName>
</protein>
<keyword id="KW-0131">Cell cycle</keyword>
<keyword id="KW-0132">Cell division</keyword>
<keyword id="KW-0963">Cytoplasm</keyword>
<keyword id="KW-0227">DNA damage</keyword>
<keyword id="KW-0234">DNA repair</keyword>
<keyword id="KW-0717">Septation</keyword>
<keyword id="KW-0742">SOS response</keyword>
<organism>
    <name type="scientific">Listeria monocytogenes serotype 4b (strain CLIP80459)</name>
    <dbReference type="NCBI Taxonomy" id="568819"/>
    <lineage>
        <taxon>Bacteria</taxon>
        <taxon>Bacillati</taxon>
        <taxon>Bacillota</taxon>
        <taxon>Bacilli</taxon>
        <taxon>Bacillales</taxon>
        <taxon>Listeriaceae</taxon>
        <taxon>Listeria</taxon>
    </lineage>
</organism>
<name>YNEA_LISMC</name>
<reference key="1">
    <citation type="journal article" date="2012" name="BMC Genomics">
        <title>Comparative genomics and transcriptomics of lineages I, II, and III strains of Listeria monocytogenes.</title>
        <authorList>
            <person name="Hain T."/>
            <person name="Ghai R."/>
            <person name="Billion A."/>
            <person name="Kuenne C.T."/>
            <person name="Steinweg C."/>
            <person name="Izar B."/>
            <person name="Mohamed W."/>
            <person name="Mraheil M."/>
            <person name="Domann E."/>
            <person name="Schaffrath S."/>
            <person name="Karst U."/>
            <person name="Goesmann A."/>
            <person name="Oehm S."/>
            <person name="Puhler A."/>
            <person name="Merkl R."/>
            <person name="Vorwerk S."/>
            <person name="Glaser P."/>
            <person name="Garrido P."/>
            <person name="Rusniok C."/>
            <person name="Buchrieser C."/>
            <person name="Goebel W."/>
            <person name="Chakraborty T."/>
        </authorList>
    </citation>
    <scope>NUCLEOTIDE SEQUENCE [LARGE SCALE GENOMIC DNA]</scope>
    <source>
        <strain>CLIP80459</strain>
    </source>
</reference>
<evidence type="ECO:0000255" key="1">
    <source>
        <dbReference type="HAMAP-Rule" id="MF_02014"/>
    </source>
</evidence>
<evidence type="ECO:0000255" key="2">
    <source>
        <dbReference type="PROSITE-ProRule" id="PRU01118"/>
    </source>
</evidence>
<feature type="chain" id="PRO_1000216414" description="Cell division suppressor protein YneA">
    <location>
        <begin position="1"/>
        <end position="109"/>
    </location>
</feature>
<feature type="domain" description="LysM" evidence="2">
    <location>
        <begin position="39"/>
        <end position="90"/>
    </location>
</feature>
<comment type="function">
    <text evidence="1">Inhibits cell division during the SOS response. Affects a later stage of the cell division protein assembly, after the assembly of the Z ring, by probably suppressing recruitment of FtsL and/or DivIC to the division machinery.</text>
</comment>
<comment type="subcellular location">
    <subcellularLocation>
        <location evidence="1">Cytoplasm</location>
    </subcellularLocation>
</comment>
<comment type="similarity">
    <text evidence="1">Belongs to the YneA family.</text>
</comment>
<dbReference type="EMBL" id="FM242711">
    <property type="protein sequence ID" value="CAS05076.1"/>
    <property type="molecule type" value="Genomic_DNA"/>
</dbReference>
<dbReference type="RefSeq" id="WP_003726566.1">
    <property type="nucleotide sequence ID" value="NC_012488.1"/>
</dbReference>
<dbReference type="SMR" id="C1L2L0"/>
<dbReference type="KEGG" id="lmc:Lm4b_01312"/>
<dbReference type="HOGENOM" id="CLU_136034_4_0_9"/>
<dbReference type="GO" id="GO:0005737">
    <property type="term" value="C:cytoplasm"/>
    <property type="evidence" value="ECO:0007669"/>
    <property type="project" value="UniProtKB-SubCell"/>
</dbReference>
<dbReference type="GO" id="GO:0000917">
    <property type="term" value="P:division septum assembly"/>
    <property type="evidence" value="ECO:0007669"/>
    <property type="project" value="UniProtKB-KW"/>
</dbReference>
<dbReference type="GO" id="GO:0006281">
    <property type="term" value="P:DNA repair"/>
    <property type="evidence" value="ECO:0007669"/>
    <property type="project" value="UniProtKB-KW"/>
</dbReference>
<dbReference type="GO" id="GO:0051782">
    <property type="term" value="P:negative regulation of cell division"/>
    <property type="evidence" value="ECO:0007669"/>
    <property type="project" value="UniProtKB-UniRule"/>
</dbReference>
<dbReference type="GO" id="GO:0009432">
    <property type="term" value="P:SOS response"/>
    <property type="evidence" value="ECO:0007669"/>
    <property type="project" value="UniProtKB-UniRule"/>
</dbReference>
<dbReference type="Gene3D" id="3.10.350.10">
    <property type="entry name" value="LysM domain"/>
    <property type="match status" value="1"/>
</dbReference>
<dbReference type="HAMAP" id="MF_02014">
    <property type="entry name" value="YneA"/>
    <property type="match status" value="1"/>
</dbReference>
<dbReference type="InterPro" id="IPR022887">
    <property type="entry name" value="Cell_div_suppressor_YneA"/>
</dbReference>
<dbReference type="InterPro" id="IPR018392">
    <property type="entry name" value="LysM_dom"/>
</dbReference>
<dbReference type="InterPro" id="IPR036779">
    <property type="entry name" value="LysM_dom_sf"/>
</dbReference>
<dbReference type="NCBIfam" id="NF010723">
    <property type="entry name" value="PRK14125.1"/>
    <property type="match status" value="1"/>
</dbReference>
<dbReference type="Pfam" id="PF01476">
    <property type="entry name" value="LysM"/>
    <property type="match status" value="1"/>
</dbReference>
<dbReference type="PROSITE" id="PS51782">
    <property type="entry name" value="LYSM"/>
    <property type="match status" value="1"/>
</dbReference>